<evidence type="ECO:0000250" key="1"/>
<evidence type="ECO:0000250" key="2">
    <source>
        <dbReference type="UniProtKB" id="P02795"/>
    </source>
</evidence>
<evidence type="ECO:0000250" key="3">
    <source>
        <dbReference type="UniProtKB" id="P62339"/>
    </source>
</evidence>
<evidence type="ECO:0000305" key="4"/>
<keyword id="KW-0479">Metal-binding</keyword>
<keyword id="KW-0480">Metal-thiolate cluster</keyword>
<comment type="function">
    <text evidence="1">Metallothioneins have a high content of cysteine residues that bind various heavy metals.</text>
</comment>
<comment type="domain">
    <text>Class I metallothioneins contain 2 metal-binding domains: four divalent ions are chelated within cluster A of the alpha domain and are coordinated via cysteinyl thiolate bridges to 11 cysteine ligands. Cluster B, the corresponding region within the beta domain, can ligate three divalent ions to 9 cysteines.</text>
</comment>
<comment type="similarity">
    <text evidence="4">Belongs to the metallothionein superfamily. Type 1 family.</text>
</comment>
<dbReference type="EMBL" id="Y12581">
    <property type="protein sequence ID" value="CAA73160.1"/>
    <property type="molecule type" value="mRNA"/>
</dbReference>
<dbReference type="SMR" id="P62711"/>
<dbReference type="GO" id="GO:0046872">
    <property type="term" value="F:metal ion binding"/>
    <property type="evidence" value="ECO:0007669"/>
    <property type="project" value="UniProtKB-KW"/>
</dbReference>
<dbReference type="FunFam" id="4.10.10.10:FF:000001">
    <property type="entry name" value="Metallothionein"/>
    <property type="match status" value="1"/>
</dbReference>
<dbReference type="Gene3D" id="4.10.10.10">
    <property type="entry name" value="Metallothionein Isoform II"/>
    <property type="match status" value="1"/>
</dbReference>
<dbReference type="InterPro" id="IPR017854">
    <property type="entry name" value="Metalthion_dom_sf"/>
</dbReference>
<dbReference type="InterPro" id="IPR023587">
    <property type="entry name" value="Metalthion_dom_sf_vert"/>
</dbReference>
<dbReference type="InterPro" id="IPR000006">
    <property type="entry name" value="Metalthion_vert"/>
</dbReference>
<dbReference type="InterPro" id="IPR018064">
    <property type="entry name" value="Metalthion_vert_metal_BS"/>
</dbReference>
<dbReference type="PANTHER" id="PTHR23299">
    <property type="entry name" value="METALLOTHIONEIN"/>
    <property type="match status" value="1"/>
</dbReference>
<dbReference type="PANTHER" id="PTHR23299:SF24">
    <property type="entry name" value="METALLOTHIONEIN-1X"/>
    <property type="match status" value="1"/>
</dbReference>
<dbReference type="Pfam" id="PF00131">
    <property type="entry name" value="Metallothio"/>
    <property type="match status" value="1"/>
</dbReference>
<dbReference type="PRINTS" id="PR00860">
    <property type="entry name" value="MTVERTEBRATE"/>
</dbReference>
<dbReference type="SUPFAM" id="SSF57868">
    <property type="entry name" value="Metallothionein"/>
    <property type="match status" value="1"/>
</dbReference>
<dbReference type="PROSITE" id="PS00203">
    <property type="entry name" value="METALLOTHIONEIN_VRT"/>
    <property type="match status" value="1"/>
</dbReference>
<reference key="1">
    <citation type="journal article" date="1998" name="Biochem. J.">
        <title>Cadmium-induced differential accumulation of metallothionein isoforms in the Antarctic icefish, which exhibits no basal metallothionein protein but high endogenous mRNA levels.</title>
        <authorList>
            <person name="Carginale V."/>
            <person name="Scudiero R."/>
            <person name="Capasso C."/>
            <person name="Capasso A."/>
            <person name="Kille P."/>
            <person name="di Prisco G."/>
            <person name="Parisi E."/>
        </authorList>
    </citation>
    <scope>NUCLEOTIDE SEQUENCE [MRNA]</scope>
    <source>
        <tissue>Liver</tissue>
    </source>
</reference>
<gene>
    <name type="primary">mtb</name>
</gene>
<protein>
    <recommendedName>
        <fullName>Metallothionein B</fullName>
        <shortName>MT-B</shortName>
        <shortName>MT-II</shortName>
    </recommendedName>
</protein>
<feature type="chain" id="PRO_0000197276" description="Metallothionein B">
    <location>
        <begin position="1"/>
        <end position="60"/>
    </location>
</feature>
<feature type="region of interest" description="Beta">
    <location>
        <begin position="1"/>
        <end position="28"/>
    </location>
</feature>
<feature type="region of interest" description="Alpha">
    <location>
        <begin position="29"/>
        <end position="60"/>
    </location>
</feature>
<feature type="binding site" evidence="2">
    <location>
        <position position="4"/>
    </location>
    <ligand>
        <name>a divalent metal cation</name>
        <dbReference type="ChEBI" id="CHEBI:60240"/>
        <label>1</label>
        <note>in cluster B</note>
    </ligand>
</feature>
<feature type="binding site" evidence="2">
    <location>
        <position position="6"/>
    </location>
    <ligand>
        <name>a divalent metal cation</name>
        <dbReference type="ChEBI" id="CHEBI:60240"/>
        <label>1</label>
        <note>in cluster B</note>
    </ligand>
</feature>
<feature type="binding site" evidence="2">
    <location>
        <position position="6"/>
    </location>
    <ligand>
        <name>a divalent metal cation</name>
        <dbReference type="ChEBI" id="CHEBI:60240"/>
        <label>2</label>
        <note>in cluster B</note>
    </ligand>
</feature>
<feature type="binding site" evidence="2">
    <location>
        <position position="12"/>
    </location>
    <ligand>
        <name>a divalent metal cation</name>
        <dbReference type="ChEBI" id="CHEBI:60240"/>
        <label>2</label>
        <note>in cluster B</note>
    </ligand>
</feature>
<feature type="binding site" evidence="2">
    <location>
        <position position="14"/>
    </location>
    <ligand>
        <name>a divalent metal cation</name>
        <dbReference type="ChEBI" id="CHEBI:60240"/>
        <label>2</label>
        <note>in cluster B</note>
    </ligand>
</feature>
<feature type="binding site" evidence="2">
    <location>
        <position position="14"/>
    </location>
    <ligand>
        <name>a divalent metal cation</name>
        <dbReference type="ChEBI" id="CHEBI:60240"/>
        <label>3</label>
        <note>in cluster B</note>
    </ligand>
</feature>
<feature type="binding site" evidence="2">
    <location>
        <position position="18"/>
    </location>
    <ligand>
        <name>a divalent metal cation</name>
        <dbReference type="ChEBI" id="CHEBI:60240"/>
        <label>3</label>
        <note>in cluster B</note>
    </ligand>
</feature>
<feature type="binding site" evidence="2">
    <location>
        <position position="20"/>
    </location>
    <ligand>
        <name>a divalent metal cation</name>
        <dbReference type="ChEBI" id="CHEBI:60240"/>
        <label>1</label>
        <note>in cluster B</note>
    </ligand>
</feature>
<feature type="binding site" evidence="2">
    <location>
        <position position="23"/>
    </location>
    <ligand>
        <name>a divalent metal cation</name>
        <dbReference type="ChEBI" id="CHEBI:60240"/>
        <label>1</label>
        <note>in cluster B</note>
    </ligand>
</feature>
<feature type="binding site" evidence="2">
    <location>
        <position position="23"/>
    </location>
    <ligand>
        <name>a divalent metal cation</name>
        <dbReference type="ChEBI" id="CHEBI:60240"/>
        <label>3</label>
        <note>in cluster B</note>
    </ligand>
</feature>
<feature type="binding site" evidence="2">
    <location>
        <position position="25"/>
    </location>
    <ligand>
        <name>a divalent metal cation</name>
        <dbReference type="ChEBI" id="CHEBI:60240"/>
        <label>2</label>
        <note>in cluster B</note>
    </ligand>
</feature>
<feature type="binding site" evidence="2">
    <location>
        <position position="28"/>
    </location>
    <ligand>
        <name>a divalent metal cation</name>
        <dbReference type="ChEBI" id="CHEBI:60240"/>
        <label>3</label>
        <note>in cluster B</note>
    </ligand>
</feature>
<feature type="binding site" evidence="2">
    <location>
        <position position="32"/>
    </location>
    <ligand>
        <name>a divalent metal cation</name>
        <dbReference type="ChEBI" id="CHEBI:60240"/>
        <label>4</label>
        <note>in cluster A</note>
    </ligand>
</feature>
<feature type="binding site" evidence="2">
    <location>
        <position position="33"/>
    </location>
    <ligand>
        <name>a divalent metal cation</name>
        <dbReference type="ChEBI" id="CHEBI:60240"/>
        <label>4</label>
        <note>in cluster A</note>
    </ligand>
</feature>
<feature type="binding site" evidence="2">
    <location>
        <position position="33"/>
    </location>
    <ligand>
        <name>a divalent metal cation</name>
        <dbReference type="ChEBI" id="CHEBI:60240"/>
        <label>5</label>
        <note>in cluster A</note>
    </ligand>
</feature>
<feature type="binding site" evidence="2">
    <location>
        <position position="35"/>
    </location>
    <ligand>
        <name>a divalent metal cation</name>
        <dbReference type="ChEBI" id="CHEBI:60240"/>
        <label>5</label>
        <note>in cluster A</note>
    </ligand>
</feature>
<feature type="binding site" evidence="2">
    <location>
        <position position="36"/>
    </location>
    <ligand>
        <name>a divalent metal cation</name>
        <dbReference type="ChEBI" id="CHEBI:60240"/>
        <label>5</label>
        <note>in cluster A</note>
    </ligand>
</feature>
<feature type="binding site" evidence="2">
    <location>
        <position position="36"/>
    </location>
    <ligand>
        <name>a divalent metal cation</name>
        <dbReference type="ChEBI" id="CHEBI:60240"/>
        <label>6</label>
        <note>in cluster A</note>
    </ligand>
</feature>
<feature type="binding site" evidence="2">
    <location>
        <position position="40"/>
    </location>
    <ligand>
        <name>a divalent metal cation</name>
        <dbReference type="ChEBI" id="CHEBI:60240"/>
        <label>6</label>
        <note>in cluster A</note>
    </ligand>
</feature>
<feature type="binding site" evidence="2">
    <location>
        <position position="43"/>
    </location>
    <ligand>
        <name>a divalent metal cation</name>
        <dbReference type="ChEBI" id="CHEBI:60240"/>
        <label>4</label>
        <note>in cluster A</note>
    </ligand>
</feature>
<feature type="binding site" evidence="2">
    <location>
        <position position="43"/>
    </location>
    <ligand>
        <name>a divalent metal cation</name>
        <dbReference type="ChEBI" id="CHEBI:60240"/>
        <label>6</label>
        <note>in cluster A</note>
    </ligand>
</feature>
<feature type="binding site" evidence="2">
    <location>
        <position position="47"/>
    </location>
    <ligand>
        <name>a divalent metal cation</name>
        <dbReference type="ChEBI" id="CHEBI:60240"/>
        <label>4</label>
        <note>in cluster A</note>
    </ligand>
</feature>
<feature type="binding site" evidence="2">
    <location>
        <position position="49"/>
    </location>
    <ligand>
        <name>a divalent metal cation</name>
        <dbReference type="ChEBI" id="CHEBI:60240"/>
        <label>5</label>
        <note>in cluster A</note>
    </ligand>
</feature>
<feature type="binding site" evidence="2">
    <location>
        <position position="49"/>
    </location>
    <ligand>
        <name>a divalent metal cation</name>
        <dbReference type="ChEBI" id="CHEBI:60240"/>
        <label>7</label>
        <note>in cluster A</note>
    </ligand>
</feature>
<feature type="binding site" evidence="3">
    <location>
        <position position="54"/>
    </location>
    <ligand>
        <name>a divalent metal cation</name>
        <dbReference type="ChEBI" id="CHEBI:60240"/>
        <label>7</label>
        <note>in cluster A</note>
    </ligand>
</feature>
<feature type="binding site" evidence="2">
    <location>
        <position position="58"/>
    </location>
    <ligand>
        <name>a divalent metal cation</name>
        <dbReference type="ChEBI" id="CHEBI:60240"/>
        <label>7</label>
        <note>in cluster A</note>
    </ligand>
</feature>
<feature type="binding site" evidence="2">
    <location>
        <position position="59"/>
    </location>
    <ligand>
        <name>a divalent metal cation</name>
        <dbReference type="ChEBI" id="CHEBI:60240"/>
        <label>6</label>
        <note>in cluster A</note>
    </ligand>
</feature>
<feature type="binding site" evidence="2">
    <location>
        <position position="59"/>
    </location>
    <ligand>
        <name>a divalent metal cation</name>
        <dbReference type="ChEBI" id="CHEBI:60240"/>
        <label>7</label>
        <note>in cluster A</note>
    </ligand>
</feature>
<organism>
    <name type="scientific">Chionodraco hamatus</name>
    <name type="common">Antarctic teleost icefish</name>
    <name type="synonym">Chaenichthys rhinoceratus hamatus</name>
    <dbReference type="NCBI Taxonomy" id="36188"/>
    <lineage>
        <taxon>Eukaryota</taxon>
        <taxon>Metazoa</taxon>
        <taxon>Chordata</taxon>
        <taxon>Craniata</taxon>
        <taxon>Vertebrata</taxon>
        <taxon>Euteleostomi</taxon>
        <taxon>Actinopterygii</taxon>
        <taxon>Neopterygii</taxon>
        <taxon>Teleostei</taxon>
        <taxon>Neoteleostei</taxon>
        <taxon>Acanthomorphata</taxon>
        <taxon>Eupercaria</taxon>
        <taxon>Perciformes</taxon>
        <taxon>Notothenioidei</taxon>
        <taxon>Channichthyidae</taxon>
        <taxon>Chionodraco</taxon>
    </lineage>
</organism>
<accession>P62711</accession>
<accession>O13259</accession>
<name>MTB_CHIHA</name>
<sequence length="60" mass="5978">MDPCDCSKSGTCNCGGSCTCTNCSCTSCKKSCCPCCPSGCTKCASGCVCKGKTCDTSCCQ</sequence>
<proteinExistence type="inferred from homology"/>